<comment type="function">
    <text evidence="1">RNA-binding component of the eukaryotic translation initiation factor 3 (eIF-3) complex, which is involved in protein synthesis of a specialized repertoire of mRNAs and, together with other initiation factors, stimulates binding of mRNA and methionyl-tRNAi to the 40S ribosome. The eIF-3 complex specifically targets and initiates translation of a subset of mRNAs involved in cell proliferation.</text>
</comment>
<comment type="subunit">
    <text evidence="1">Component of the eukaryotic translation initiation factor 3 (eIF-3) complex.</text>
</comment>
<comment type="subcellular location">
    <subcellularLocation>
        <location evidence="1">Cytoplasm</location>
    </subcellularLocation>
</comment>
<comment type="similarity">
    <text evidence="1">Belongs to the eIF-3 subunit A family.</text>
</comment>
<name>EIF3A_CHAGB</name>
<proteinExistence type="inferred from homology"/>
<dbReference type="EMBL" id="CH408031">
    <property type="protein sequence ID" value="EAQ89132.1"/>
    <property type="molecule type" value="Genomic_DNA"/>
</dbReference>
<dbReference type="RefSeq" id="XP_001221846.1">
    <property type="nucleotide sequence ID" value="XM_001221845.1"/>
</dbReference>
<dbReference type="SMR" id="Q2H6G4"/>
<dbReference type="FunCoup" id="Q2H6G4">
    <property type="interactions" value="1161"/>
</dbReference>
<dbReference type="STRING" id="306901.Q2H6G4"/>
<dbReference type="GeneID" id="4391313"/>
<dbReference type="VEuPathDB" id="FungiDB:CHGG_05751"/>
<dbReference type="eggNOG" id="KOG2072">
    <property type="taxonomic scope" value="Eukaryota"/>
</dbReference>
<dbReference type="HOGENOM" id="CLU_002096_2_1_1"/>
<dbReference type="InParanoid" id="Q2H6G4"/>
<dbReference type="OMA" id="EHITNKR"/>
<dbReference type="OrthoDB" id="18884at2759"/>
<dbReference type="Proteomes" id="UP000001056">
    <property type="component" value="Unassembled WGS sequence"/>
</dbReference>
<dbReference type="GO" id="GO:0010494">
    <property type="term" value="C:cytoplasmic stress granule"/>
    <property type="evidence" value="ECO:0007669"/>
    <property type="project" value="EnsemblFungi"/>
</dbReference>
<dbReference type="GO" id="GO:0016282">
    <property type="term" value="C:eukaryotic 43S preinitiation complex"/>
    <property type="evidence" value="ECO:0007669"/>
    <property type="project" value="UniProtKB-UniRule"/>
</dbReference>
<dbReference type="GO" id="GO:0033290">
    <property type="term" value="C:eukaryotic 48S preinitiation complex"/>
    <property type="evidence" value="ECO:0007669"/>
    <property type="project" value="UniProtKB-UniRule"/>
</dbReference>
<dbReference type="GO" id="GO:0071540">
    <property type="term" value="C:eukaryotic translation initiation factor 3 complex, eIF3e"/>
    <property type="evidence" value="ECO:0007669"/>
    <property type="project" value="EnsemblFungi"/>
</dbReference>
<dbReference type="GO" id="GO:0071541">
    <property type="term" value="C:eukaryotic translation initiation factor 3 complex, eIF3m"/>
    <property type="evidence" value="ECO:0007669"/>
    <property type="project" value="EnsemblFungi"/>
</dbReference>
<dbReference type="GO" id="GO:0043614">
    <property type="term" value="C:multi-eIF complex"/>
    <property type="evidence" value="ECO:0007669"/>
    <property type="project" value="TreeGrafter"/>
</dbReference>
<dbReference type="GO" id="GO:0003729">
    <property type="term" value="F:mRNA binding"/>
    <property type="evidence" value="ECO:0007669"/>
    <property type="project" value="TreeGrafter"/>
</dbReference>
<dbReference type="GO" id="GO:0003743">
    <property type="term" value="F:translation initiation factor activity"/>
    <property type="evidence" value="ECO:0007669"/>
    <property type="project" value="UniProtKB-UniRule"/>
</dbReference>
<dbReference type="GO" id="GO:0001732">
    <property type="term" value="P:formation of cytoplasmic translation initiation complex"/>
    <property type="evidence" value="ECO:0007669"/>
    <property type="project" value="UniProtKB-UniRule"/>
</dbReference>
<dbReference type="GO" id="GO:0002188">
    <property type="term" value="P:translation reinitiation"/>
    <property type="evidence" value="ECO:0007669"/>
    <property type="project" value="TreeGrafter"/>
</dbReference>
<dbReference type="FunFam" id="1.25.40.860:FF:000003">
    <property type="entry name" value="Eukaryotic translation initiation factor 3 subunit A"/>
    <property type="match status" value="1"/>
</dbReference>
<dbReference type="FunFam" id="4.10.860.10:FF:000001">
    <property type="entry name" value="Eukaryotic translation initiation factor 3 subunit A"/>
    <property type="match status" value="1"/>
</dbReference>
<dbReference type="Gene3D" id="1.25.40.860">
    <property type="match status" value="2"/>
</dbReference>
<dbReference type="Gene3D" id="4.10.860.10">
    <property type="entry name" value="UVR domain"/>
    <property type="match status" value="1"/>
</dbReference>
<dbReference type="HAMAP" id="MF_03000">
    <property type="entry name" value="eIF3a"/>
    <property type="match status" value="1"/>
</dbReference>
<dbReference type="InterPro" id="IPR027512">
    <property type="entry name" value="EIF3A"/>
</dbReference>
<dbReference type="InterPro" id="IPR054711">
    <property type="entry name" value="eIF3a_PCI_TPR-like"/>
</dbReference>
<dbReference type="InterPro" id="IPR000717">
    <property type="entry name" value="PCI_dom"/>
</dbReference>
<dbReference type="PANTHER" id="PTHR14005:SF0">
    <property type="entry name" value="EUKARYOTIC TRANSLATION INITIATION FACTOR 3 SUBUNIT A"/>
    <property type="match status" value="1"/>
</dbReference>
<dbReference type="PANTHER" id="PTHR14005">
    <property type="entry name" value="EUKARYOTIC TRANSLATION INITIATION FACTOR 3, THETA SUBUNIT"/>
    <property type="match status" value="1"/>
</dbReference>
<dbReference type="Pfam" id="PF22591">
    <property type="entry name" value="eIF3a_PCI_TPR-like"/>
    <property type="match status" value="1"/>
</dbReference>
<dbReference type="Pfam" id="PF01399">
    <property type="entry name" value="PCI"/>
    <property type="match status" value="1"/>
</dbReference>
<dbReference type="SMART" id="SM00088">
    <property type="entry name" value="PINT"/>
    <property type="match status" value="1"/>
</dbReference>
<dbReference type="PROSITE" id="PS50250">
    <property type="entry name" value="PCI"/>
    <property type="match status" value="1"/>
</dbReference>
<protein>
    <recommendedName>
        <fullName evidence="1">Eukaryotic translation initiation factor 3 subunit A</fullName>
        <shortName evidence="1">eIF3a</shortName>
    </recommendedName>
    <alternativeName>
        <fullName evidence="1">Eukaryotic translation initiation factor 3 110 kDa subunit homolog</fullName>
        <shortName evidence="1">eIF3 p110</shortName>
    </alternativeName>
    <alternativeName>
        <fullName evidence="1">Translation initiation factor eIF3, p110 subunit homolog</fullName>
    </alternativeName>
</protein>
<gene>
    <name evidence="1" type="primary">TIF32</name>
    <name type="ORF">CHGG_05751</name>
</gene>
<accession>Q2H6G4</accession>
<evidence type="ECO:0000255" key="1">
    <source>
        <dbReference type="HAMAP-Rule" id="MF_03000"/>
    </source>
</evidence>
<evidence type="ECO:0000255" key="2">
    <source>
        <dbReference type="PROSITE-ProRule" id="PRU01185"/>
    </source>
</evidence>
<evidence type="ECO:0000256" key="3">
    <source>
        <dbReference type="SAM" id="MobiDB-lite"/>
    </source>
</evidence>
<keyword id="KW-0175">Coiled coil</keyword>
<keyword id="KW-0963">Cytoplasm</keyword>
<keyword id="KW-0396">Initiation factor</keyword>
<keyword id="KW-0648">Protein biosynthesis</keyword>
<keyword id="KW-1185">Reference proteome</keyword>
<keyword id="KW-0694">RNA-binding</keyword>
<reference key="1">
    <citation type="journal article" date="2015" name="Genome Announc.">
        <title>Draft genome sequence of the cellulolytic fungus Chaetomium globosum.</title>
        <authorList>
            <person name="Cuomo C.A."/>
            <person name="Untereiner W.A."/>
            <person name="Ma L.-J."/>
            <person name="Grabherr M."/>
            <person name="Birren B.W."/>
        </authorList>
    </citation>
    <scope>NUCLEOTIDE SEQUENCE [LARGE SCALE GENOMIC DNA]</scope>
    <source>
        <strain>ATCC 6205 / CBS 148.51 / DSM 1962 / NBRC 6347 / NRRL 1970</strain>
    </source>
</reference>
<sequence>MPPPPHQKPENVLKRAHELIGVNQAPAALTLLHEHITSKRSRNVPIASLEPVMVLLVEQAVEQKKGKLAKDALYQYKNIAQNTNVGTIELVLKKFIELAAEKVTAAQQKADEVQSSIEATTGSSSVEDLEASETPESILLATVSGEQSKDRTDRAIVTPWLKFLWEAYRTVLDILRNNARLELLYQSTAMQAFDFCLKYARKTEFRRLCELLRNHVQTAAKYSAQMHAINLNDPDTLQRHLETRFQQLNVAVELELWQEAFRSVEDIHTLLSLSKRPAKNIMMANYYEKLTRIFLVGENYLFHAAAWSRYYNLLRQSAAMLATGQSKKSDSPPVSEADLQKAATFVVLSALSIPVISTSRSRGAMVDFDEARKNKNSRLTHLLGLSQAPTRSSLFRDVLSKALLRRASPQIRDLYNILEVDFHPLSICQKISPILAQVGADEEMQKYILPLQQVILTRLFQQLSQVYETVDLEFVQSLAQFPEPFQVTRGTIEKFIMNGNKKGDLAIRMDHATGVLSFDVDVFSSAKAVHAGSAAGSAENESGSVQRLQSTPSQIVRSQLTRLAEVLYTTCRYIDPSFNEARINARDAVLARAKAGAEKEHLEILSRKEVIQKRKDKASEIQAQKEKELARKKMLQEQALQQAEAQRLAEEQKIREQKRMAAEREEIKKKEVEGMLKDMKLDDVELEDLDNLDSNKIRMIKLQQLEREKNTIAEKLRVTGKRLDHLERAFRKEEAKKLPEDYAKQRERDIAAYELIKAQTLKEAELKHKEDVELKHRLTRLMPFYESFRADLHERRRDMFEKRRRDAERELEKQVTLRRKEYRERKLREKREREEKERALREAEERAEREKEEEKQRQEARKEELARLREEREKERERAKEAQARQQQREEEAMARRRAEKAAAAAVPIREREPFAATGSGPRLPLAGTKSTWREREAAKAAGGGAPSDSGPPPARAAPPPIERTDSRDRPAAGPPRLALAGNKPSWREREAAKNAAGGAPPPERSGPPPRVASGRGEPMDRAGSGRGGDRDARDNNGPAPEPLKASGGPGKYVPKFRREG</sequence>
<feature type="chain" id="PRO_0000366358" description="Eukaryotic translation initiation factor 3 subunit A">
    <location>
        <begin position="1"/>
        <end position="1061"/>
    </location>
</feature>
<feature type="domain" description="PCI" evidence="2">
    <location>
        <begin position="339"/>
        <end position="523"/>
    </location>
</feature>
<feature type="region of interest" description="Disordered" evidence="3">
    <location>
        <begin position="114"/>
        <end position="133"/>
    </location>
</feature>
<feature type="region of interest" description="Disordered" evidence="3">
    <location>
        <begin position="828"/>
        <end position="1061"/>
    </location>
</feature>
<feature type="coiled-coil region" evidence="1">
    <location>
        <begin position="609"/>
        <end position="724"/>
    </location>
</feature>
<feature type="coiled-coil region" evidence="1">
    <location>
        <begin position="789"/>
        <end position="906"/>
    </location>
</feature>
<feature type="compositionally biased region" description="Polar residues" evidence="3">
    <location>
        <begin position="114"/>
        <end position="126"/>
    </location>
</feature>
<feature type="compositionally biased region" description="Basic and acidic residues" evidence="3">
    <location>
        <begin position="828"/>
        <end position="901"/>
    </location>
</feature>
<feature type="compositionally biased region" description="Pro residues" evidence="3">
    <location>
        <begin position="950"/>
        <end position="962"/>
    </location>
</feature>
<feature type="compositionally biased region" description="Pro residues" evidence="3">
    <location>
        <begin position="1000"/>
        <end position="1011"/>
    </location>
</feature>
<organism>
    <name type="scientific">Chaetomium globosum (strain ATCC 6205 / CBS 148.51 / DSM 1962 / NBRC 6347 / NRRL 1970)</name>
    <name type="common">Soil fungus</name>
    <dbReference type="NCBI Taxonomy" id="306901"/>
    <lineage>
        <taxon>Eukaryota</taxon>
        <taxon>Fungi</taxon>
        <taxon>Dikarya</taxon>
        <taxon>Ascomycota</taxon>
        <taxon>Pezizomycotina</taxon>
        <taxon>Sordariomycetes</taxon>
        <taxon>Sordariomycetidae</taxon>
        <taxon>Sordariales</taxon>
        <taxon>Chaetomiaceae</taxon>
        <taxon>Chaetomium</taxon>
    </lineage>
</organism>